<reference evidence="5 7" key="1">
    <citation type="journal article" date="2003" name="Gene Expr. Patterns">
        <title>Spatial and temporal expression patterns of selenoprotein genes during embryogenesis in zebrafish.</title>
        <authorList>
            <person name="Thisse C."/>
            <person name="Degrave A."/>
            <person name="Kryukov G.V."/>
            <person name="Gladyshev V.N."/>
            <person name="Obrecht-Pflumio S."/>
            <person name="Krol A."/>
            <person name="Thisse B."/>
            <person name="Lescure A."/>
        </authorList>
    </citation>
    <scope>NUCLEOTIDE SEQUENCE [MRNA]</scope>
    <scope>TISSUE SPECIFICITY</scope>
    <source>
        <tissue>Embryo</tissue>
    </source>
</reference>
<reference evidence="6" key="2">
    <citation type="submission" date="2004-06" db="EMBL/GenBank/DDBJ databases">
        <authorList>
            <consortium name="NIH - Zebrafish Gene Collection (ZGC) project"/>
        </authorList>
    </citation>
    <scope>NUCLEOTIDE SEQUENCE [LARGE SCALE MRNA]</scope>
    <source>
        <tissue evidence="6">Embryo</tissue>
    </source>
</reference>
<dbReference type="EMBL" id="AY221263">
    <property type="protein sequence ID" value="AAO65272.1"/>
    <property type="molecule type" value="mRNA"/>
</dbReference>
<dbReference type="EMBL" id="BC071511">
    <property type="protein sequence ID" value="AAH71511.1"/>
    <property type="status" value="ALT_SEQ"/>
    <property type="molecule type" value="mRNA"/>
</dbReference>
<dbReference type="RefSeq" id="NP_840079.1">
    <property type="nucleotide sequence ID" value="NM_178294.5"/>
</dbReference>
<dbReference type="FunCoup" id="Q802F3">
    <property type="interactions" value="1412"/>
</dbReference>
<dbReference type="STRING" id="7955.ENSDARP00000137608"/>
<dbReference type="PaxDb" id="7955-ENSDARP00000114895"/>
<dbReference type="Ensembl" id="ENSDART00000158486">
    <property type="protein sequence ID" value="ENSDARP00000137608"/>
    <property type="gene ID" value="ENSDARG00000099664"/>
</dbReference>
<dbReference type="GeneID" id="352923"/>
<dbReference type="KEGG" id="dre:352923"/>
<dbReference type="AGR" id="ZFIN:ZDB-GENE-030327-1"/>
<dbReference type="CTD" id="9403"/>
<dbReference type="ZFIN" id="ZDB-GENE-030327-1">
    <property type="gene designation" value="selenof"/>
</dbReference>
<dbReference type="eggNOG" id="KOG3384">
    <property type="taxonomic scope" value="Eukaryota"/>
</dbReference>
<dbReference type="InParanoid" id="Q802F3"/>
<dbReference type="OMA" id="IKPHCKQ"/>
<dbReference type="OrthoDB" id="1910009at2759"/>
<dbReference type="PhylomeDB" id="Q802F3"/>
<dbReference type="TreeFam" id="TF315117"/>
<dbReference type="PRO" id="PR:Q802F3"/>
<dbReference type="Proteomes" id="UP000000437">
    <property type="component" value="Chromosome 2"/>
</dbReference>
<dbReference type="Bgee" id="ENSDARG00000099664">
    <property type="expression patterns" value="Expressed in somite and 39 other cell types or tissues"/>
</dbReference>
<dbReference type="GO" id="GO:0005788">
    <property type="term" value="C:endoplasmic reticulum lumen"/>
    <property type="evidence" value="ECO:0000250"/>
    <property type="project" value="UniProtKB"/>
</dbReference>
<dbReference type="GO" id="GO:0016491">
    <property type="term" value="F:oxidoreductase activity"/>
    <property type="evidence" value="ECO:0000318"/>
    <property type="project" value="GO_Central"/>
</dbReference>
<dbReference type="GO" id="GO:0008430">
    <property type="term" value="F:selenium binding"/>
    <property type="evidence" value="ECO:0000250"/>
    <property type="project" value="UniProtKB"/>
</dbReference>
<dbReference type="FunFam" id="3.40.30.50:FF:000001">
    <property type="entry name" value="15 kDa selenoprotein"/>
    <property type="match status" value="1"/>
</dbReference>
<dbReference type="Gene3D" id="3.40.30.50">
    <property type="entry name" value="Sep15/SelM thioredoxin-like domain, active-site redox motif"/>
    <property type="match status" value="1"/>
</dbReference>
<dbReference type="InterPro" id="IPR038219">
    <property type="entry name" value="Sep15/SelM_sf"/>
</dbReference>
<dbReference type="InterPro" id="IPR039992">
    <property type="entry name" value="Sep15_SelM"/>
</dbReference>
<dbReference type="InterPro" id="IPR014912">
    <property type="entry name" value="Sep15_SelM_dom"/>
</dbReference>
<dbReference type="InterPro" id="IPR036249">
    <property type="entry name" value="Thioredoxin-like_sf"/>
</dbReference>
<dbReference type="PANTHER" id="PTHR13077">
    <property type="entry name" value="SELENOPROTEIN F"/>
    <property type="match status" value="1"/>
</dbReference>
<dbReference type="PANTHER" id="PTHR13077:SF6">
    <property type="entry name" value="SELENOPROTEIN F"/>
    <property type="match status" value="1"/>
</dbReference>
<dbReference type="Pfam" id="PF08806">
    <property type="entry name" value="Sep15_SelM"/>
    <property type="match status" value="1"/>
</dbReference>
<dbReference type="SUPFAM" id="SSF52833">
    <property type="entry name" value="Thioredoxin-like"/>
    <property type="match status" value="1"/>
</dbReference>
<gene>
    <name evidence="1" type="primary">selenof</name>
    <name type="synonym">cb29</name>
    <name evidence="8" type="synonym">sep15</name>
    <name type="ORF">zgc:86882</name>
</gene>
<sequence length="153" mass="17223">MAGEVYLLWLLPLLQGLASYGAELSSEACRELGFSSNLLCSSCELLGQFSLNQLDLPCRQCCQEEAQLENRKLYPGAILEVCGUKLGRFPQVQAFVRSDKPKLFRGLQIKYVRGSDPVLKLLDDNGNIAEELSILKWNTDSVEEFLSEKLERI</sequence>
<keyword id="KW-0256">Endoplasmic reticulum</keyword>
<keyword id="KW-1185">Reference proteome</keyword>
<keyword id="KW-0712">Selenocysteine</keyword>
<keyword id="KW-0732">Signal</keyword>
<evidence type="ECO:0000250" key="1">
    <source>
        <dbReference type="UniProtKB" id="O60613"/>
    </source>
</evidence>
<evidence type="ECO:0000255" key="2"/>
<evidence type="ECO:0000269" key="3">
    <source>
    </source>
</evidence>
<evidence type="ECO:0000303" key="4">
    <source>
    </source>
</evidence>
<evidence type="ECO:0000305" key="5"/>
<evidence type="ECO:0000312" key="6">
    <source>
        <dbReference type="EMBL" id="AAH71511.1"/>
    </source>
</evidence>
<evidence type="ECO:0000312" key="7">
    <source>
        <dbReference type="EMBL" id="AAO65272.1"/>
    </source>
</evidence>
<evidence type="ECO:0000312" key="8">
    <source>
        <dbReference type="ZFIN" id="ZDB-GENE-030327-1"/>
    </source>
</evidence>
<protein>
    <recommendedName>
        <fullName evidence="1">Selenoprotein F</fullName>
    </recommendedName>
    <alternativeName>
        <fullName evidence="4">15 kDa selenoprotein</fullName>
    </alternativeName>
</protein>
<accession>Q802F3</accession>
<accession>Q6IQ99</accession>
<organism>
    <name type="scientific">Danio rerio</name>
    <name type="common">Zebrafish</name>
    <name type="synonym">Brachydanio rerio</name>
    <dbReference type="NCBI Taxonomy" id="7955"/>
    <lineage>
        <taxon>Eukaryota</taxon>
        <taxon>Metazoa</taxon>
        <taxon>Chordata</taxon>
        <taxon>Craniata</taxon>
        <taxon>Vertebrata</taxon>
        <taxon>Euteleostomi</taxon>
        <taxon>Actinopterygii</taxon>
        <taxon>Neopterygii</taxon>
        <taxon>Teleostei</taxon>
        <taxon>Ostariophysi</taxon>
        <taxon>Cypriniformes</taxon>
        <taxon>Danionidae</taxon>
        <taxon>Danioninae</taxon>
        <taxon>Danio</taxon>
    </lineage>
</organism>
<proteinExistence type="evidence at transcript level"/>
<name>SEP15_DANRE</name>
<feature type="signal peptide" evidence="2">
    <location>
        <begin position="1"/>
        <end position="19"/>
    </location>
</feature>
<feature type="chain" id="PRO_0000022306" description="Selenoprotein F" evidence="2">
    <location>
        <begin position="20"/>
        <end position="153"/>
    </location>
</feature>
<feature type="non-standard amino acid" description="Selenocysteine" evidence="7">
    <location>
        <position position="84"/>
    </location>
</feature>
<comment type="function">
    <text evidence="1">May be involved in redox reactions associated with the formation of disulfide bonds. May contribute to the quality control of protein folding in the endoplasmic reticulum (By similarity).</text>
</comment>
<comment type="subcellular location">
    <subcellularLocation>
        <location evidence="1">Endoplasmic reticulum lumen</location>
    </subcellularLocation>
</comment>
<comment type="tissue specificity">
    <text evidence="3">Higher levels in polster, prechordal plate, axis, otic vesicle and somites. Lower levels in fin buds.</text>
</comment>
<comment type="similarity">
    <text evidence="5">Belongs to the selenoprotein M/F family.</text>
</comment>
<comment type="sequence caution" evidence="5">
    <conflict type="erroneous termination">
        <sequence resource="EMBL-CDS" id="AAH71511"/>
    </conflict>
    <text>Truncated C-terminus.</text>
</comment>